<proteinExistence type="predicted"/>
<sequence length="148" mass="15985">MRLTTKGRFAVTAMLDLAMNAQTGAVKLSAISERQNISLSYLEQLFGKLRRAGLVESLRGPGGGYILAAPAARINIAQIIAAAEDRLDATQCGSKANCHHGAPCLTHDLWENLNKTINDYLGSVTLQSIIEQKNNGDGSRVVQFTHIH</sequence>
<keyword id="KW-0238">DNA-binding</keyword>
<keyword id="KW-1185">Reference proteome</keyword>
<organism>
    <name type="scientific">Neisseria meningitidis serogroup B (strain ATCC BAA-335 / MC58)</name>
    <dbReference type="NCBI Taxonomy" id="122586"/>
    <lineage>
        <taxon>Bacteria</taxon>
        <taxon>Pseudomonadati</taxon>
        <taxon>Pseudomonadota</taxon>
        <taxon>Betaproteobacteria</taxon>
        <taxon>Neisseriales</taxon>
        <taxon>Neisseriaceae</taxon>
        <taxon>Neisseria</taxon>
    </lineage>
</organism>
<reference key="1">
    <citation type="journal article" date="1996" name="J. Bacteriol.">
        <title>Cloning of a Neisseria meningitidis gene for L-lactate dehydrogenase (L-LDH): evidence for a second meningococcal L-LDH with different regulation.</title>
        <authorList>
            <person name="Erwin A.L."/>
            <person name="Gotschlich E.C."/>
        </authorList>
    </citation>
    <scope>NUCLEOTIDE SEQUENCE [GENOMIC DNA]</scope>
    <source>
        <strain>CCUG 37602 / M1080 / Serogroup B / Serotype 1</strain>
    </source>
</reference>
<reference key="2">
    <citation type="journal article" date="2000" name="Science">
        <title>Complete genome sequence of Neisseria meningitidis serogroup B strain MC58.</title>
        <authorList>
            <person name="Tettelin H."/>
            <person name="Saunders N.J."/>
            <person name="Heidelberg J.F."/>
            <person name="Jeffries A.C."/>
            <person name="Nelson K.E."/>
            <person name="Eisen J.A."/>
            <person name="Ketchum K.A."/>
            <person name="Hood D.W."/>
            <person name="Peden J.F."/>
            <person name="Dodson R.J."/>
            <person name="Nelson W.C."/>
            <person name="Gwinn M.L."/>
            <person name="DeBoy R.T."/>
            <person name="Peterson J.D."/>
            <person name="Hickey E.K."/>
            <person name="Haft D.H."/>
            <person name="Salzberg S.L."/>
            <person name="White O."/>
            <person name="Fleischmann R.D."/>
            <person name="Dougherty B.A."/>
            <person name="Mason T.M."/>
            <person name="Ciecko A."/>
            <person name="Parksey D.S."/>
            <person name="Blair E."/>
            <person name="Cittone H."/>
            <person name="Clark E.B."/>
            <person name="Cotton M.D."/>
            <person name="Utterback T.R."/>
            <person name="Khouri H.M."/>
            <person name="Qin H."/>
            <person name="Vamathevan J.J."/>
            <person name="Gill J."/>
            <person name="Scarlato V."/>
            <person name="Masignani V."/>
            <person name="Pizza M."/>
            <person name="Grandi G."/>
            <person name="Sun L."/>
            <person name="Smith H.O."/>
            <person name="Fraser C.M."/>
            <person name="Moxon E.R."/>
            <person name="Rappuoli R."/>
            <person name="Venter J.C."/>
        </authorList>
    </citation>
    <scope>NUCLEOTIDE SEQUENCE [LARGE SCALE GENOMIC DNA]</scope>
    <source>
        <strain>ATCC BAA-335 / MC58</strain>
    </source>
</reference>
<evidence type="ECO:0000255" key="1">
    <source>
        <dbReference type="PROSITE-ProRule" id="PRU00540"/>
    </source>
</evidence>
<evidence type="ECO:0000305" key="2"/>
<dbReference type="EMBL" id="U58911">
    <property type="protein sequence ID" value="AAB09668.1"/>
    <property type="molecule type" value="Genomic_DNA"/>
</dbReference>
<dbReference type="EMBL" id="AE002098">
    <property type="protein sequence ID" value="AAF62328.1"/>
    <property type="molecule type" value="Genomic_DNA"/>
</dbReference>
<dbReference type="RefSeq" id="NP_274394.1">
    <property type="nucleotide sequence ID" value="NC_003112.2"/>
</dbReference>
<dbReference type="SMR" id="P0A0Z0"/>
<dbReference type="FunCoup" id="P0A0Z0">
    <property type="interactions" value="303"/>
</dbReference>
<dbReference type="STRING" id="122586.NMB1378"/>
<dbReference type="PaxDb" id="122586-NMB1378"/>
<dbReference type="KEGG" id="nme:NMB1378"/>
<dbReference type="PATRIC" id="fig|122586.8.peg.1728"/>
<dbReference type="HOGENOM" id="CLU_107144_0_0_4"/>
<dbReference type="InParanoid" id="P0A0Z0"/>
<dbReference type="OrthoDB" id="9808360at2"/>
<dbReference type="Proteomes" id="UP000000425">
    <property type="component" value="Chromosome"/>
</dbReference>
<dbReference type="GO" id="GO:0005829">
    <property type="term" value="C:cytosol"/>
    <property type="evidence" value="ECO:0000318"/>
    <property type="project" value="GO_Central"/>
</dbReference>
<dbReference type="GO" id="GO:0003700">
    <property type="term" value="F:DNA-binding transcription factor activity"/>
    <property type="evidence" value="ECO:0000318"/>
    <property type="project" value="GO_Central"/>
</dbReference>
<dbReference type="GO" id="GO:0003690">
    <property type="term" value="F:double-stranded DNA binding"/>
    <property type="evidence" value="ECO:0007669"/>
    <property type="project" value="InterPro"/>
</dbReference>
<dbReference type="GO" id="GO:0006355">
    <property type="term" value="P:regulation of DNA-templated transcription"/>
    <property type="evidence" value="ECO:0000318"/>
    <property type="project" value="GO_Central"/>
</dbReference>
<dbReference type="FunFam" id="1.10.10.10:FF:000026">
    <property type="entry name" value="HTH-type transcriptional regulator IscR"/>
    <property type="match status" value="1"/>
</dbReference>
<dbReference type="Gene3D" id="1.10.10.10">
    <property type="entry name" value="Winged helix-like DNA-binding domain superfamily/Winged helix DNA-binding domain"/>
    <property type="match status" value="1"/>
</dbReference>
<dbReference type="InterPro" id="IPR010242">
    <property type="entry name" value="TF_HTH_IscR"/>
</dbReference>
<dbReference type="InterPro" id="IPR030489">
    <property type="entry name" value="TR_Rrf2-type_CS"/>
</dbReference>
<dbReference type="InterPro" id="IPR000944">
    <property type="entry name" value="Tscrpt_reg_Rrf2"/>
</dbReference>
<dbReference type="InterPro" id="IPR036388">
    <property type="entry name" value="WH-like_DNA-bd_sf"/>
</dbReference>
<dbReference type="InterPro" id="IPR036390">
    <property type="entry name" value="WH_DNA-bd_sf"/>
</dbReference>
<dbReference type="NCBIfam" id="TIGR02010">
    <property type="entry name" value="IscR"/>
    <property type="match status" value="1"/>
</dbReference>
<dbReference type="NCBIfam" id="TIGR00738">
    <property type="entry name" value="rrf2_super"/>
    <property type="match status" value="1"/>
</dbReference>
<dbReference type="PANTHER" id="PTHR33221:SF5">
    <property type="entry name" value="HTH-TYPE TRANSCRIPTIONAL REGULATOR ISCR"/>
    <property type="match status" value="1"/>
</dbReference>
<dbReference type="PANTHER" id="PTHR33221">
    <property type="entry name" value="WINGED HELIX-TURN-HELIX TRANSCRIPTIONAL REGULATOR, RRF2 FAMILY"/>
    <property type="match status" value="1"/>
</dbReference>
<dbReference type="Pfam" id="PF02082">
    <property type="entry name" value="Rrf2"/>
    <property type="match status" value="1"/>
</dbReference>
<dbReference type="SUPFAM" id="SSF46785">
    <property type="entry name" value="Winged helix' DNA-binding domain"/>
    <property type="match status" value="1"/>
</dbReference>
<dbReference type="PROSITE" id="PS01332">
    <property type="entry name" value="HTH_RRF2_1"/>
    <property type="match status" value="1"/>
</dbReference>
<dbReference type="PROSITE" id="PS51197">
    <property type="entry name" value="HTH_RRF2_2"/>
    <property type="match status" value="1"/>
</dbReference>
<gene>
    <name type="ordered locus">NMB1378</name>
</gene>
<accession>P0A0Z0</accession>
<accession>Q51134</accession>
<protein>
    <recommendedName>
        <fullName>Putative HTH-type transcriptional regulator NMB1378</fullName>
    </recommendedName>
</protein>
<feature type="chain" id="PRO_0000036208" description="Putative HTH-type transcriptional regulator NMB1378">
    <location>
        <begin position="1"/>
        <end position="148"/>
    </location>
</feature>
<feature type="domain" description="HTH rrf2-type" evidence="1">
    <location>
        <begin position="2"/>
        <end position="131"/>
    </location>
</feature>
<feature type="sequence conflict" description="In Ref. 1; AAB09668." evidence="2" ref="1">
    <original>RF</original>
    <variation>LS</variation>
    <location>
        <begin position="8"/>
        <end position="9"/>
    </location>
</feature>
<feature type="sequence conflict" description="In Ref. 1; AAB09668." evidence="2" ref="1">
    <original>QKNNGDGSRVVQFTHIH</original>
    <variation>TEKQRRRQPRSSNLHTSIK</variation>
    <location>
        <begin position="132"/>
        <end position="148"/>
    </location>
</feature>
<name>Y1378_NEIMB</name>